<protein>
    <recommendedName>
        <fullName>Colicin-E8 immunity protein in ColE6</fullName>
        <shortName>E8Imm[E6]</shortName>
    </recommendedName>
</protein>
<name>IMMX_ECOLX</name>
<keyword id="KW-0079">Bacteriocin immunity</keyword>
<keyword id="KW-0614">Plasmid</keyword>
<evidence type="ECO:0000305" key="1"/>
<organism>
    <name type="scientific">Escherichia coli</name>
    <dbReference type="NCBI Taxonomy" id="562"/>
    <lineage>
        <taxon>Bacteria</taxon>
        <taxon>Pseudomonadati</taxon>
        <taxon>Pseudomonadota</taxon>
        <taxon>Gammaproteobacteria</taxon>
        <taxon>Enterobacterales</taxon>
        <taxon>Enterobacteriaceae</taxon>
        <taxon>Escherichia</taxon>
    </lineage>
</organism>
<feature type="chain" id="PRO_0000218710" description="Colicin-E8 immunity protein in ColE6">
    <location>
        <begin position="1"/>
        <end position="85"/>
    </location>
</feature>
<reference key="1">
    <citation type="journal article" date="1989" name="Mol. Gen. Genet.">
        <title>Nucleotide sequences from the colicin E5, E6 and E9 operons: presence of a degenerate transposon-like structure in the ColE9-J plasmid.</title>
        <authorList>
            <person name="Lau P.C.K."/>
            <person name="Condie J.A."/>
        </authorList>
    </citation>
    <scope>NUCLEOTIDE SEQUENCE [GENOMIC DNA]</scope>
</reference>
<reference key="2">
    <citation type="journal article" date="1989" name="J. Bacteriol.">
        <title>Molecular structure and immunity specificity of colicin E6, an evolutionary intermediate between E-group colicins and cloacin DF13.</title>
        <authorList>
            <person name="Akutsu A."/>
            <person name="Masaki H."/>
            <person name="Ohta T."/>
        </authorList>
    </citation>
    <scope>NUCLEOTIDE SEQUENCE [GENOMIC DNA]</scope>
</reference>
<geneLocation type="plasmid">
    <name>ColE6-CT14</name>
</geneLocation>
<sequence length="85" mass="9606">MELKKSIGDYTETEFKKIIENIINCEGDEKKQDDNLEHFISVTEHPSGSDLIYYPEGNNDGSPEAVIKEIKEWRAANGKSGFKQG</sequence>
<proteinExistence type="inferred from homology"/>
<dbReference type="EMBL" id="X15856">
    <property type="protein sequence ID" value="CAA33857.1"/>
    <property type="molecule type" value="Genomic_DNA"/>
</dbReference>
<dbReference type="EMBL" id="M31808">
    <property type="protein sequence ID" value="AAA23082.1"/>
    <property type="molecule type" value="Genomic_DNA"/>
</dbReference>
<dbReference type="PIR" id="JQ0327">
    <property type="entry name" value="JQ0327"/>
</dbReference>
<dbReference type="SMR" id="P13478"/>
<dbReference type="GO" id="GO:0015643">
    <property type="term" value="F:toxic substance binding"/>
    <property type="evidence" value="ECO:0007669"/>
    <property type="project" value="InterPro"/>
</dbReference>
<dbReference type="GO" id="GO:0030153">
    <property type="term" value="P:bacteriocin immunity"/>
    <property type="evidence" value="ECO:0007669"/>
    <property type="project" value="UniProtKB-KW"/>
</dbReference>
<dbReference type="CDD" id="cd16363">
    <property type="entry name" value="Col_Im_like"/>
    <property type="match status" value="1"/>
</dbReference>
<dbReference type="Gene3D" id="1.10.1200.20">
    <property type="entry name" value="Colicin E immunity protein"/>
    <property type="match status" value="1"/>
</dbReference>
<dbReference type="InterPro" id="IPR035900">
    <property type="entry name" value="Colicin_E_sf"/>
</dbReference>
<dbReference type="InterPro" id="IPR000290">
    <property type="entry name" value="Colicin_pyocin"/>
</dbReference>
<dbReference type="Pfam" id="PF01320">
    <property type="entry name" value="Colicin_Pyocin"/>
    <property type="match status" value="1"/>
</dbReference>
<dbReference type="PRINTS" id="PR01299">
    <property type="entry name" value="PYOCIN"/>
</dbReference>
<dbReference type="SUPFAM" id="SSF47345">
    <property type="entry name" value="Colicin E immunity proteins"/>
    <property type="match status" value="1"/>
</dbReference>
<gene>
    <name type="primary">imm</name>
</gene>
<accession>P13478</accession>
<comment type="similarity">
    <text evidence="1">Belongs to the colicins ColE2/ColE8/ColE9 and pyocins S1/S2 family.</text>
</comment>